<comment type="function">
    <text evidence="1">Involved in mRNA degradation. Catalyzes the phosphorolysis of single-stranded polyribonucleotides processively in the 3'- to 5'-direction.</text>
</comment>
<comment type="catalytic activity">
    <reaction evidence="1">
        <text>RNA(n+1) + phosphate = RNA(n) + a ribonucleoside 5'-diphosphate</text>
        <dbReference type="Rhea" id="RHEA:22096"/>
        <dbReference type="Rhea" id="RHEA-COMP:14527"/>
        <dbReference type="Rhea" id="RHEA-COMP:17342"/>
        <dbReference type="ChEBI" id="CHEBI:43474"/>
        <dbReference type="ChEBI" id="CHEBI:57930"/>
        <dbReference type="ChEBI" id="CHEBI:140395"/>
        <dbReference type="EC" id="2.7.7.8"/>
    </reaction>
</comment>
<comment type="cofactor">
    <cofactor evidence="1">
        <name>Mg(2+)</name>
        <dbReference type="ChEBI" id="CHEBI:18420"/>
    </cofactor>
</comment>
<comment type="subunit">
    <text evidence="1">Component of the RNA degradosome, which is a multiprotein complex involved in RNA processing and mRNA degradation.</text>
</comment>
<comment type="subcellular location">
    <subcellularLocation>
        <location evidence="1">Cytoplasm</location>
    </subcellularLocation>
</comment>
<comment type="similarity">
    <text evidence="1">Belongs to the polyribonucleotide nucleotidyltransferase family.</text>
</comment>
<sequence>MSMFNIIRKEFQFGQHQVVLETGRVARQANTVLVTMGGVTVLVAVVAQPKAKAGQDFFPLTVNYQEKQYAAGRIPGGYGKREGRASEAETLISRLIDRPIRPLFPEGYFNEIQITATVVSSDKTMDADIAAMLGASAALSIAGTPFRGPIGGARVGLINGEYVLNPNFEQLAQSDLDLVVAGTESAVLMVESEAKELSEDQMLGAVLFGHDEMQIAVQAIKEFAAAAGAVESTWVAPTKNETLLEQLKAAFEAKISEAYTIAVKQDRYTALDALYAEAVAQFVPENDETGIADEVNELFEDLKYRTVRDNILSGKPRIDGRDTKTVRAIDVQVGVLDRAHGSALFTRGETQALVTTTLGNTRDALMVDTLAGTKTDNFMLHYNFPAYSVGETGRESGPKRREIGHGRLARRGVQAVLPAADRFPYVIRIVSDITESNGSSSMASVCGASLSLMDAGVPLKAPVAGIAMGLVKEGERFAVLSDILGDEDHLGDMDFKVAGSANGITALQMDIKIEGITEEIMEVALNQAYAGRMHILNEMNKVISRARAEISAHAPTFEVITINPDKIRDVIGKGGATIRQITEETKAAIDIEDNGTVRVFGETKAAARAAIAKIQALTAEVEPGKIYDGKVIRIVEFGAFVNIMPGTDGLLHISQISNERVANVSDVLKEGQDVKVQVADVDNRGRIKLSMKDIEQA</sequence>
<keyword id="KW-0963">Cytoplasm</keyword>
<keyword id="KW-0460">Magnesium</keyword>
<keyword id="KW-0479">Metal-binding</keyword>
<keyword id="KW-0548">Nucleotidyltransferase</keyword>
<keyword id="KW-0694">RNA-binding</keyword>
<keyword id="KW-0808">Transferase</keyword>
<accession>Q6FF12</accession>
<protein>
    <recommendedName>
        <fullName evidence="1">Polyribonucleotide nucleotidyltransferase</fullName>
        <ecNumber evidence="1">2.7.7.8</ecNumber>
    </recommendedName>
    <alternativeName>
        <fullName evidence="1">Polynucleotide phosphorylase</fullName>
        <shortName evidence="1">PNPase</shortName>
    </alternativeName>
</protein>
<organism>
    <name type="scientific">Acinetobacter baylyi (strain ATCC 33305 / BD413 / ADP1)</name>
    <dbReference type="NCBI Taxonomy" id="62977"/>
    <lineage>
        <taxon>Bacteria</taxon>
        <taxon>Pseudomonadati</taxon>
        <taxon>Pseudomonadota</taxon>
        <taxon>Gammaproteobacteria</taxon>
        <taxon>Moraxellales</taxon>
        <taxon>Moraxellaceae</taxon>
        <taxon>Acinetobacter</taxon>
    </lineage>
</organism>
<feature type="chain" id="PRO_0000329483" description="Polyribonucleotide nucleotidyltransferase">
    <location>
        <begin position="1"/>
        <end position="697"/>
    </location>
</feature>
<feature type="domain" description="KH" evidence="1">
    <location>
        <begin position="555"/>
        <end position="614"/>
    </location>
</feature>
<feature type="domain" description="S1 motif" evidence="1">
    <location>
        <begin position="624"/>
        <end position="692"/>
    </location>
</feature>
<feature type="binding site" evidence="1">
    <location>
        <position position="488"/>
    </location>
    <ligand>
        <name>Mg(2+)</name>
        <dbReference type="ChEBI" id="CHEBI:18420"/>
    </ligand>
</feature>
<feature type="binding site" evidence="1">
    <location>
        <position position="494"/>
    </location>
    <ligand>
        <name>Mg(2+)</name>
        <dbReference type="ChEBI" id="CHEBI:18420"/>
    </ligand>
</feature>
<dbReference type="EC" id="2.7.7.8" evidence="1"/>
<dbReference type="EMBL" id="CR543861">
    <property type="protein sequence ID" value="CAG67346.1"/>
    <property type="molecule type" value="Genomic_DNA"/>
</dbReference>
<dbReference type="SMR" id="Q6FF12"/>
<dbReference type="STRING" id="202950.GCA_001485005_00660"/>
<dbReference type="KEGG" id="aci:ACIAD0402"/>
<dbReference type="eggNOG" id="COG1185">
    <property type="taxonomic scope" value="Bacteria"/>
</dbReference>
<dbReference type="HOGENOM" id="CLU_004217_2_2_6"/>
<dbReference type="OrthoDB" id="9804305at2"/>
<dbReference type="BioCyc" id="ASP62977:ACIAD_RS01865-MONOMER"/>
<dbReference type="Proteomes" id="UP000000430">
    <property type="component" value="Chromosome"/>
</dbReference>
<dbReference type="GO" id="GO:0005829">
    <property type="term" value="C:cytosol"/>
    <property type="evidence" value="ECO:0007669"/>
    <property type="project" value="TreeGrafter"/>
</dbReference>
<dbReference type="GO" id="GO:0000175">
    <property type="term" value="F:3'-5'-RNA exonuclease activity"/>
    <property type="evidence" value="ECO:0007669"/>
    <property type="project" value="TreeGrafter"/>
</dbReference>
<dbReference type="GO" id="GO:0000287">
    <property type="term" value="F:magnesium ion binding"/>
    <property type="evidence" value="ECO:0007669"/>
    <property type="project" value="UniProtKB-UniRule"/>
</dbReference>
<dbReference type="GO" id="GO:0004654">
    <property type="term" value="F:polyribonucleotide nucleotidyltransferase activity"/>
    <property type="evidence" value="ECO:0007669"/>
    <property type="project" value="UniProtKB-UniRule"/>
</dbReference>
<dbReference type="GO" id="GO:0003723">
    <property type="term" value="F:RNA binding"/>
    <property type="evidence" value="ECO:0007669"/>
    <property type="project" value="UniProtKB-UniRule"/>
</dbReference>
<dbReference type="GO" id="GO:0006402">
    <property type="term" value="P:mRNA catabolic process"/>
    <property type="evidence" value="ECO:0007669"/>
    <property type="project" value="UniProtKB-UniRule"/>
</dbReference>
<dbReference type="GO" id="GO:0006396">
    <property type="term" value="P:RNA processing"/>
    <property type="evidence" value="ECO:0007669"/>
    <property type="project" value="InterPro"/>
</dbReference>
<dbReference type="CDD" id="cd02393">
    <property type="entry name" value="KH-I_PNPase"/>
    <property type="match status" value="1"/>
</dbReference>
<dbReference type="CDD" id="cd11363">
    <property type="entry name" value="RNase_PH_PNPase_1"/>
    <property type="match status" value="1"/>
</dbReference>
<dbReference type="CDD" id="cd11364">
    <property type="entry name" value="RNase_PH_PNPase_2"/>
    <property type="match status" value="1"/>
</dbReference>
<dbReference type="CDD" id="cd04472">
    <property type="entry name" value="S1_PNPase"/>
    <property type="match status" value="1"/>
</dbReference>
<dbReference type="FunFam" id="2.40.50.140:FF:000023">
    <property type="entry name" value="Polyribonucleotide nucleotidyltransferase"/>
    <property type="match status" value="1"/>
</dbReference>
<dbReference type="FunFam" id="3.30.1370.10:FF:000001">
    <property type="entry name" value="Polyribonucleotide nucleotidyltransferase"/>
    <property type="match status" value="1"/>
</dbReference>
<dbReference type="FunFam" id="3.30.230.70:FF:000001">
    <property type="entry name" value="Polyribonucleotide nucleotidyltransferase"/>
    <property type="match status" value="1"/>
</dbReference>
<dbReference type="FunFam" id="3.30.230.70:FF:000002">
    <property type="entry name" value="Polyribonucleotide nucleotidyltransferase"/>
    <property type="match status" value="1"/>
</dbReference>
<dbReference type="Gene3D" id="3.30.230.70">
    <property type="entry name" value="GHMP Kinase, N-terminal domain"/>
    <property type="match status" value="2"/>
</dbReference>
<dbReference type="Gene3D" id="3.30.1370.10">
    <property type="entry name" value="K Homology domain, type 1"/>
    <property type="match status" value="1"/>
</dbReference>
<dbReference type="Gene3D" id="2.40.50.140">
    <property type="entry name" value="Nucleic acid-binding proteins"/>
    <property type="match status" value="1"/>
</dbReference>
<dbReference type="HAMAP" id="MF_01595">
    <property type="entry name" value="PNPase"/>
    <property type="match status" value="1"/>
</dbReference>
<dbReference type="InterPro" id="IPR001247">
    <property type="entry name" value="ExoRNase_PH_dom1"/>
</dbReference>
<dbReference type="InterPro" id="IPR015847">
    <property type="entry name" value="ExoRNase_PH_dom2"/>
</dbReference>
<dbReference type="InterPro" id="IPR036345">
    <property type="entry name" value="ExoRNase_PH_dom2_sf"/>
</dbReference>
<dbReference type="InterPro" id="IPR004087">
    <property type="entry name" value="KH_dom"/>
</dbReference>
<dbReference type="InterPro" id="IPR004088">
    <property type="entry name" value="KH_dom_type_1"/>
</dbReference>
<dbReference type="InterPro" id="IPR036612">
    <property type="entry name" value="KH_dom_type_1_sf"/>
</dbReference>
<dbReference type="InterPro" id="IPR012340">
    <property type="entry name" value="NA-bd_OB-fold"/>
</dbReference>
<dbReference type="InterPro" id="IPR012162">
    <property type="entry name" value="PNPase"/>
</dbReference>
<dbReference type="InterPro" id="IPR027408">
    <property type="entry name" value="PNPase/RNase_PH_dom_sf"/>
</dbReference>
<dbReference type="InterPro" id="IPR015848">
    <property type="entry name" value="PNPase_PH_RNA-bd_bac/org-type"/>
</dbReference>
<dbReference type="InterPro" id="IPR020568">
    <property type="entry name" value="Ribosomal_Su5_D2-typ_SF"/>
</dbReference>
<dbReference type="InterPro" id="IPR003029">
    <property type="entry name" value="S1_domain"/>
</dbReference>
<dbReference type="NCBIfam" id="TIGR03591">
    <property type="entry name" value="polynuc_phos"/>
    <property type="match status" value="1"/>
</dbReference>
<dbReference type="NCBIfam" id="NF008805">
    <property type="entry name" value="PRK11824.1"/>
    <property type="match status" value="1"/>
</dbReference>
<dbReference type="PANTHER" id="PTHR11252">
    <property type="entry name" value="POLYRIBONUCLEOTIDE NUCLEOTIDYLTRANSFERASE"/>
    <property type="match status" value="1"/>
</dbReference>
<dbReference type="PANTHER" id="PTHR11252:SF0">
    <property type="entry name" value="POLYRIBONUCLEOTIDE NUCLEOTIDYLTRANSFERASE 1, MITOCHONDRIAL"/>
    <property type="match status" value="1"/>
</dbReference>
<dbReference type="Pfam" id="PF00013">
    <property type="entry name" value="KH_1"/>
    <property type="match status" value="1"/>
</dbReference>
<dbReference type="Pfam" id="PF03726">
    <property type="entry name" value="PNPase"/>
    <property type="match status" value="1"/>
</dbReference>
<dbReference type="Pfam" id="PF01138">
    <property type="entry name" value="RNase_PH"/>
    <property type="match status" value="2"/>
</dbReference>
<dbReference type="Pfam" id="PF03725">
    <property type="entry name" value="RNase_PH_C"/>
    <property type="match status" value="2"/>
</dbReference>
<dbReference type="Pfam" id="PF00575">
    <property type="entry name" value="S1"/>
    <property type="match status" value="1"/>
</dbReference>
<dbReference type="PIRSF" id="PIRSF005499">
    <property type="entry name" value="PNPase"/>
    <property type="match status" value="1"/>
</dbReference>
<dbReference type="SMART" id="SM00322">
    <property type="entry name" value="KH"/>
    <property type="match status" value="1"/>
</dbReference>
<dbReference type="SMART" id="SM00316">
    <property type="entry name" value="S1"/>
    <property type="match status" value="1"/>
</dbReference>
<dbReference type="SUPFAM" id="SSF54791">
    <property type="entry name" value="Eukaryotic type KH-domain (KH-domain type I)"/>
    <property type="match status" value="1"/>
</dbReference>
<dbReference type="SUPFAM" id="SSF50249">
    <property type="entry name" value="Nucleic acid-binding proteins"/>
    <property type="match status" value="1"/>
</dbReference>
<dbReference type="SUPFAM" id="SSF55666">
    <property type="entry name" value="Ribonuclease PH domain 2-like"/>
    <property type="match status" value="2"/>
</dbReference>
<dbReference type="SUPFAM" id="SSF54211">
    <property type="entry name" value="Ribosomal protein S5 domain 2-like"/>
    <property type="match status" value="2"/>
</dbReference>
<dbReference type="PROSITE" id="PS50084">
    <property type="entry name" value="KH_TYPE_1"/>
    <property type="match status" value="1"/>
</dbReference>
<dbReference type="PROSITE" id="PS50126">
    <property type="entry name" value="S1"/>
    <property type="match status" value="1"/>
</dbReference>
<reference key="1">
    <citation type="journal article" date="2004" name="Nucleic Acids Res.">
        <title>Unique features revealed by the genome sequence of Acinetobacter sp. ADP1, a versatile and naturally transformation competent bacterium.</title>
        <authorList>
            <person name="Barbe V."/>
            <person name="Vallenet D."/>
            <person name="Fonknechten N."/>
            <person name="Kreimeyer A."/>
            <person name="Oztas S."/>
            <person name="Labarre L."/>
            <person name="Cruveiller S."/>
            <person name="Robert C."/>
            <person name="Duprat S."/>
            <person name="Wincker P."/>
            <person name="Ornston L.N."/>
            <person name="Weissenbach J."/>
            <person name="Marliere P."/>
            <person name="Cohen G.N."/>
            <person name="Medigue C."/>
        </authorList>
    </citation>
    <scope>NUCLEOTIDE SEQUENCE [LARGE SCALE GENOMIC DNA]</scope>
    <source>
        <strain>ATCC 33305 / BD413 / ADP1</strain>
    </source>
</reference>
<proteinExistence type="inferred from homology"/>
<name>PNP_ACIAD</name>
<gene>
    <name evidence="1" type="primary">pnp</name>
    <name type="ordered locus">ACIAD0402</name>
</gene>
<evidence type="ECO:0000255" key="1">
    <source>
        <dbReference type="HAMAP-Rule" id="MF_01595"/>
    </source>
</evidence>